<comment type="function">
    <text>This is a seed storage protein.</text>
</comment>
<comment type="subunit">
    <text>Heterohexamer; each subunit is composed of an acidic and a basic chain derived from a single precursor and linked by a disulfide bond.</text>
</comment>
<comment type="subcellular location">
    <subcellularLocation>
        <location>Rough endoplasmic reticulum</location>
    </subcellularLocation>
</comment>
<comment type="similarity">
    <text evidence="6">Belongs to the 11S seed storage protein (globulins) family.</text>
</comment>
<sequence length="465" mass="51377">MGPTSLLSFFFTFLTLFHGFTAQQWPNECQLDQLNALEPSQIIKSEGGRIEVWDHHAPQLRCSGFAFERFVIEPQGLYLPTFLNAGKLTFVVHGHALMGKVTPGCAETFNDSPVFGQGQGQEQGQGQGQGQGQGFRDMHQKVEHLRSGDTIATPPGVAQWFYNNGNEPLILVAAADIANNLNQLDRNLRPFLLAGNNPQGQQWLQGRQQQKQNNIFNGFAPQILAQAFKISVETAQKLQNQQVNRGNIVKVQGQFGVIRPPLRQGQGGQQPQEEGNGLEETLCTMRCTENLDDPSSADVYKPSLGYISTLNSYNLPILRFLRLSALRGSIHNNAMVLPQWNVNANAALYVTKGKAHIQNVNDNGQRVFDQEISKGQLLVVPQGFAVVKRATSQQFQWIEFKSNDNAQINTLAGRTSVMRGLPLEVISNGYQISPQEARSVKFSTLETTLTQSSGPMGYGMPRVEA</sequence>
<proteinExistence type="evidence at protein level"/>
<organism>
    <name type="scientific">Brassica napus</name>
    <name type="common">Rape</name>
    <dbReference type="NCBI Taxonomy" id="3708"/>
    <lineage>
        <taxon>Eukaryota</taxon>
        <taxon>Viridiplantae</taxon>
        <taxon>Streptophyta</taxon>
        <taxon>Embryophyta</taxon>
        <taxon>Tracheophyta</taxon>
        <taxon>Spermatophyta</taxon>
        <taxon>Magnoliopsida</taxon>
        <taxon>eudicotyledons</taxon>
        <taxon>Gunneridae</taxon>
        <taxon>Pentapetalae</taxon>
        <taxon>rosids</taxon>
        <taxon>malvids</taxon>
        <taxon>Brassicales</taxon>
        <taxon>Brassicaceae</taxon>
        <taxon>Brassiceae</taxon>
        <taxon>Brassica</taxon>
    </lineage>
</organism>
<accession>P33522</accession>
<evidence type="ECO:0000250" key="1"/>
<evidence type="ECO:0000250" key="2">
    <source>
        <dbReference type="UniProtKB" id="P15455"/>
    </source>
</evidence>
<evidence type="ECO:0000250" key="3">
    <source>
        <dbReference type="UniProtKB" id="P15456"/>
    </source>
</evidence>
<evidence type="ECO:0000255" key="4"/>
<evidence type="ECO:0000256" key="5">
    <source>
        <dbReference type="SAM" id="MobiDB-lite"/>
    </source>
</evidence>
<evidence type="ECO:0000305" key="6"/>
<keyword id="KW-0903">Direct protein sequencing</keyword>
<keyword id="KW-1015">Disulfide bond</keyword>
<keyword id="KW-0256">Endoplasmic reticulum</keyword>
<keyword id="KW-0597">Phosphoprotein</keyword>
<keyword id="KW-0708">Seed storage protein</keyword>
<keyword id="KW-0732">Signal</keyword>
<keyword id="KW-0758">Storage protein</keyword>
<protein>
    <recommendedName>
        <fullName>Cruciferin CRU4</fullName>
    </recommendedName>
    <alternativeName>
        <fullName>11S globulin</fullName>
    </alternativeName>
    <alternativeName>
        <fullName>12S storage protein</fullName>
    </alternativeName>
    <component>
        <recommendedName>
            <fullName>Cruciferin CRU4 alpha chain</fullName>
        </recommendedName>
    </component>
    <component>
        <recommendedName>
            <fullName>Cruciferin CRU4 beta chain</fullName>
        </recommendedName>
    </component>
</protein>
<name>CRU4_BRANA</name>
<reference key="1">
    <citation type="journal article" date="1991" name="Eur. J. Biochem.">
        <title>Characterization of the 12S globulin complex of Brassica napus. Evolutionary relationship to other 11-12S storage globulins.</title>
        <authorList>
            <person name="Sjoedahl S."/>
            <person name="Roedin J."/>
            <person name="Rask L."/>
        </authorList>
    </citation>
    <scope>NUCLEOTIDE SEQUENCE [MRNA]</scope>
    <source>
        <strain>cv. Svalofs Karat 20516-K</strain>
        <tissue>Seed</tissue>
    </source>
</reference>
<reference key="2">
    <citation type="journal article" date="1990" name="J. Biol. Chem.">
        <title>Characterization of a cDNA clone encoding a Brassica napus 12 S protein (cruciferin) subunit. Relationship between precursors and mature chains.</title>
        <authorList>
            <person name="Roedin J."/>
            <person name="Ericson M.L."/>
            <person name="Josefsson L.-G."/>
            <person name="Rask L."/>
        </authorList>
    </citation>
    <scope>PROTEIN SEQUENCE OF 108-119; 139-153; 277-308; 336-360 AND 372-395</scope>
</reference>
<gene>
    <name type="primary">CRU4</name>
</gene>
<feature type="signal peptide" evidence="1">
    <location>
        <begin position="1"/>
        <end position="22"/>
    </location>
</feature>
<feature type="chain" id="PRO_0000032038" description="Cruciferin CRU4 alpha chain">
    <location>
        <begin position="23"/>
        <end position="276"/>
    </location>
</feature>
<feature type="chain" id="PRO_0000032039" description="Cruciferin CRU4 beta chain">
    <location>
        <begin position="277"/>
        <end position="465"/>
    </location>
</feature>
<feature type="domain" description="Cupin type-1 1" evidence="4">
    <location>
        <begin position="34"/>
        <end position="236"/>
    </location>
</feature>
<feature type="domain" description="Cupin type-1 2" evidence="4">
    <location>
        <begin position="289"/>
        <end position="438"/>
    </location>
</feature>
<feature type="region of interest" description="Disordered" evidence="5">
    <location>
        <begin position="112"/>
        <end position="135"/>
    </location>
</feature>
<feature type="compositionally biased region" description="Gly residues" evidence="5">
    <location>
        <begin position="117"/>
        <end position="133"/>
    </location>
</feature>
<feature type="modified residue" description="Phosphothreonine" evidence="2">
    <location>
        <position position="108"/>
    </location>
</feature>
<feature type="modified residue" description="Phosphotyrosine" evidence="2">
    <location>
        <position position="306"/>
    </location>
</feature>
<feature type="modified residue" description="Phosphoserine" evidence="2">
    <location>
        <position position="308"/>
    </location>
</feature>
<feature type="modified residue" description="Phosphoserine" evidence="3">
    <location>
        <position position="443"/>
    </location>
</feature>
<feature type="disulfide bond" evidence="1">
    <location>
        <begin position="29"/>
        <end position="62"/>
    </location>
</feature>
<feature type="disulfide bond" description="Interchain (between alpha and beta chains)" evidence="4">
    <location>
        <begin position="105"/>
        <end position="283"/>
    </location>
</feature>
<feature type="sequence variant">
    <original>N</original>
    <variation>M</variation>
    <location>
        <position position="110"/>
    </location>
</feature>
<feature type="sequence variant">
    <original>S</original>
    <variation>H</variation>
    <location>
        <position position="147"/>
    </location>
</feature>
<feature type="sequence variant">
    <original>N</original>
    <variation>M</variation>
    <location>
        <position position="359"/>
    </location>
</feature>
<feature type="sequence variant">
    <original>K</original>
    <variation>Q</variation>
    <location>
        <position position="374"/>
    </location>
</feature>
<dbReference type="EMBL" id="X57848">
    <property type="protein sequence ID" value="CAA40978.1"/>
    <property type="molecule type" value="mRNA"/>
</dbReference>
<dbReference type="EMBL" id="X57850">
    <property type="protein sequence ID" value="CAA40980.1"/>
    <property type="molecule type" value="mRNA"/>
</dbReference>
<dbReference type="EMBL" id="X57851">
    <property type="protein sequence ID" value="CAA40981.1"/>
    <property type="molecule type" value="mRNA"/>
</dbReference>
<dbReference type="PIR" id="S14762">
    <property type="entry name" value="S14762"/>
</dbReference>
<dbReference type="SMR" id="P33522"/>
<dbReference type="GO" id="GO:0005791">
    <property type="term" value="C:rough endoplasmic reticulum"/>
    <property type="evidence" value="ECO:0007669"/>
    <property type="project" value="UniProtKB-SubCell"/>
</dbReference>
<dbReference type="GO" id="GO:0045735">
    <property type="term" value="F:nutrient reservoir activity"/>
    <property type="evidence" value="ECO:0007669"/>
    <property type="project" value="UniProtKB-KW"/>
</dbReference>
<dbReference type="GO" id="GO:0010431">
    <property type="term" value="P:seed maturation"/>
    <property type="evidence" value="ECO:0007669"/>
    <property type="project" value="UniProtKB-ARBA"/>
</dbReference>
<dbReference type="CDD" id="cd02243">
    <property type="entry name" value="cupin_11S_legumin_C"/>
    <property type="match status" value="1"/>
</dbReference>
<dbReference type="CDD" id="cd02242">
    <property type="entry name" value="cupin_11S_legumin_N"/>
    <property type="match status" value="1"/>
</dbReference>
<dbReference type="FunFam" id="2.60.120.10:FF:000073">
    <property type="entry name" value="Glycinin G1"/>
    <property type="match status" value="1"/>
</dbReference>
<dbReference type="Gene3D" id="2.60.120.10">
    <property type="entry name" value="Jelly Rolls"/>
    <property type="match status" value="2"/>
</dbReference>
<dbReference type="InterPro" id="IPR022379">
    <property type="entry name" value="11S_seedstore_CS"/>
</dbReference>
<dbReference type="InterPro" id="IPR006044">
    <property type="entry name" value="11S_seedstore_pln"/>
</dbReference>
<dbReference type="InterPro" id="IPR006045">
    <property type="entry name" value="Cupin_1"/>
</dbReference>
<dbReference type="InterPro" id="IPR014710">
    <property type="entry name" value="RmlC-like_jellyroll"/>
</dbReference>
<dbReference type="InterPro" id="IPR011051">
    <property type="entry name" value="RmlC_Cupin_sf"/>
</dbReference>
<dbReference type="InterPro" id="IPR050253">
    <property type="entry name" value="Seed_Storage-Functional"/>
</dbReference>
<dbReference type="PANTHER" id="PTHR31189:SF35">
    <property type="entry name" value="12S SEED STORAGE PROTEIN CRB"/>
    <property type="match status" value="1"/>
</dbReference>
<dbReference type="PANTHER" id="PTHR31189">
    <property type="entry name" value="OS03G0336100 PROTEIN-RELATED"/>
    <property type="match status" value="1"/>
</dbReference>
<dbReference type="Pfam" id="PF00190">
    <property type="entry name" value="Cupin_1"/>
    <property type="match status" value="2"/>
</dbReference>
<dbReference type="PRINTS" id="PR00439">
    <property type="entry name" value="11SGLOBULIN"/>
</dbReference>
<dbReference type="SMART" id="SM00835">
    <property type="entry name" value="Cupin_1"/>
    <property type="match status" value="2"/>
</dbReference>
<dbReference type="SUPFAM" id="SSF51182">
    <property type="entry name" value="RmlC-like cupins"/>
    <property type="match status" value="1"/>
</dbReference>
<dbReference type="PROSITE" id="PS00305">
    <property type="entry name" value="11S_SEED_STORAGE"/>
    <property type="match status" value="1"/>
</dbReference>